<reference key="1">
    <citation type="journal article" date="2001" name="J. Bacteriol.">
        <title>Genome sequence and comparative analysis of the solvent-producing bacterium Clostridium acetobutylicum.</title>
        <authorList>
            <person name="Noelling J."/>
            <person name="Breton G."/>
            <person name="Omelchenko M.V."/>
            <person name="Makarova K.S."/>
            <person name="Zeng Q."/>
            <person name="Gibson R."/>
            <person name="Lee H.M."/>
            <person name="Dubois J."/>
            <person name="Qiu D."/>
            <person name="Hitti J."/>
            <person name="Wolf Y.I."/>
            <person name="Tatusov R.L."/>
            <person name="Sabathe F."/>
            <person name="Doucette-Stamm L.A."/>
            <person name="Soucaille P."/>
            <person name="Daly M.J."/>
            <person name="Bennett G.N."/>
            <person name="Koonin E.V."/>
            <person name="Smith D.R."/>
        </authorList>
    </citation>
    <scope>NUCLEOTIDE SEQUENCE [LARGE SCALE GENOMIC DNA]</scope>
    <source>
        <strain>ATCC 824 / DSM 792 / JCM 1419 / IAM 19013 / LMG 5710 / NBRC 13948 / NRRL B-527 / VKM B-1787 / 2291 / W</strain>
    </source>
</reference>
<name>HIS2_CLOAB</name>
<accession>Q97KH6</accession>
<proteinExistence type="inferred from homology"/>
<gene>
    <name type="primary">hisE</name>
    <name type="ordered locus">CA_C0943</name>
</gene>
<sequence>MDKNEILSKLYNVIEDRKNNPIEGSYTNYLFEKGIDKILKKVGEETTEVIIASKDDNKEDLINEICDVIYHTLVLLNYKNIKLEDIEKELQKRNEKILNKKQERRPIENI</sequence>
<protein>
    <recommendedName>
        <fullName>Phosphoribosyl-ATP pyrophosphatase</fullName>
        <shortName>PRA-PH</shortName>
        <ecNumber>3.6.1.31</ecNumber>
    </recommendedName>
</protein>
<comment type="catalytic activity">
    <reaction>
        <text>1-(5-phospho-beta-D-ribosyl)-ATP + H2O = 1-(5-phospho-beta-D-ribosyl)-5'-AMP + diphosphate + H(+)</text>
        <dbReference type="Rhea" id="RHEA:22828"/>
        <dbReference type="ChEBI" id="CHEBI:15377"/>
        <dbReference type="ChEBI" id="CHEBI:15378"/>
        <dbReference type="ChEBI" id="CHEBI:33019"/>
        <dbReference type="ChEBI" id="CHEBI:59457"/>
        <dbReference type="ChEBI" id="CHEBI:73183"/>
        <dbReference type="EC" id="3.6.1.31"/>
    </reaction>
</comment>
<comment type="pathway">
    <text>Amino-acid biosynthesis; L-histidine biosynthesis; L-histidine from 5-phospho-alpha-D-ribose 1-diphosphate: step 2/9.</text>
</comment>
<comment type="subcellular location">
    <subcellularLocation>
        <location evidence="1">Cytoplasm</location>
    </subcellularLocation>
</comment>
<comment type="similarity">
    <text evidence="2">Belongs to the PRA-PH family.</text>
</comment>
<keyword id="KW-0028">Amino-acid biosynthesis</keyword>
<keyword id="KW-0067">ATP-binding</keyword>
<keyword id="KW-0963">Cytoplasm</keyword>
<keyword id="KW-0368">Histidine biosynthesis</keyword>
<keyword id="KW-0378">Hydrolase</keyword>
<keyword id="KW-0547">Nucleotide-binding</keyword>
<keyword id="KW-1185">Reference proteome</keyword>
<evidence type="ECO:0000250" key="1"/>
<evidence type="ECO:0000305" key="2"/>
<organism>
    <name type="scientific">Clostridium acetobutylicum (strain ATCC 824 / DSM 792 / JCM 1419 / IAM 19013 / LMG 5710 / NBRC 13948 / NRRL B-527 / VKM B-1787 / 2291 / W)</name>
    <dbReference type="NCBI Taxonomy" id="272562"/>
    <lineage>
        <taxon>Bacteria</taxon>
        <taxon>Bacillati</taxon>
        <taxon>Bacillota</taxon>
        <taxon>Clostridia</taxon>
        <taxon>Eubacteriales</taxon>
        <taxon>Clostridiaceae</taxon>
        <taxon>Clostridium</taxon>
    </lineage>
</organism>
<dbReference type="EC" id="3.6.1.31"/>
<dbReference type="EMBL" id="AE001437">
    <property type="protein sequence ID" value="AAK78919.1"/>
    <property type="molecule type" value="Genomic_DNA"/>
</dbReference>
<dbReference type="PIR" id="D97016">
    <property type="entry name" value="D97016"/>
</dbReference>
<dbReference type="RefSeq" id="NP_347579.1">
    <property type="nucleotide sequence ID" value="NC_003030.1"/>
</dbReference>
<dbReference type="RefSeq" id="WP_010964261.1">
    <property type="nucleotide sequence ID" value="NC_003030.1"/>
</dbReference>
<dbReference type="SMR" id="Q97KH6"/>
<dbReference type="STRING" id="272562.CA_C0943"/>
<dbReference type="GeneID" id="44997453"/>
<dbReference type="KEGG" id="cac:CA_C0943"/>
<dbReference type="PATRIC" id="fig|272562.8.peg.1153"/>
<dbReference type="eggNOG" id="COG0140">
    <property type="taxonomic scope" value="Bacteria"/>
</dbReference>
<dbReference type="HOGENOM" id="CLU_123337_0_0_9"/>
<dbReference type="OrthoDB" id="9795769at2"/>
<dbReference type="UniPathway" id="UPA00031">
    <property type="reaction ID" value="UER00007"/>
</dbReference>
<dbReference type="Proteomes" id="UP000000814">
    <property type="component" value="Chromosome"/>
</dbReference>
<dbReference type="GO" id="GO:0005737">
    <property type="term" value="C:cytoplasm"/>
    <property type="evidence" value="ECO:0007669"/>
    <property type="project" value="UniProtKB-SubCell"/>
</dbReference>
<dbReference type="GO" id="GO:0005524">
    <property type="term" value="F:ATP binding"/>
    <property type="evidence" value="ECO:0007669"/>
    <property type="project" value="UniProtKB-KW"/>
</dbReference>
<dbReference type="GO" id="GO:0004636">
    <property type="term" value="F:phosphoribosyl-ATP diphosphatase activity"/>
    <property type="evidence" value="ECO:0007669"/>
    <property type="project" value="UniProtKB-UniRule"/>
</dbReference>
<dbReference type="GO" id="GO:0000105">
    <property type="term" value="P:L-histidine biosynthetic process"/>
    <property type="evidence" value="ECO:0007669"/>
    <property type="project" value="UniProtKB-UniRule"/>
</dbReference>
<dbReference type="CDD" id="cd11534">
    <property type="entry name" value="NTP-PPase_HisIE_like"/>
    <property type="match status" value="1"/>
</dbReference>
<dbReference type="FunFam" id="1.10.287.1080:FF:000002">
    <property type="entry name" value="Histidine biosynthesis bifunctional protein HisIE"/>
    <property type="match status" value="1"/>
</dbReference>
<dbReference type="Gene3D" id="1.10.287.1080">
    <property type="entry name" value="MazG-like"/>
    <property type="match status" value="1"/>
</dbReference>
<dbReference type="HAMAP" id="MF_01020">
    <property type="entry name" value="HisE"/>
    <property type="match status" value="1"/>
</dbReference>
<dbReference type="InterPro" id="IPR008179">
    <property type="entry name" value="HisE"/>
</dbReference>
<dbReference type="InterPro" id="IPR021130">
    <property type="entry name" value="PRib-ATP_PPHydrolase-like"/>
</dbReference>
<dbReference type="NCBIfam" id="TIGR03188">
    <property type="entry name" value="histidine_hisI"/>
    <property type="match status" value="1"/>
</dbReference>
<dbReference type="NCBIfam" id="NF001611">
    <property type="entry name" value="PRK00400.1-3"/>
    <property type="match status" value="1"/>
</dbReference>
<dbReference type="PANTHER" id="PTHR42945">
    <property type="entry name" value="HISTIDINE BIOSYNTHESIS BIFUNCTIONAL PROTEIN"/>
    <property type="match status" value="1"/>
</dbReference>
<dbReference type="PANTHER" id="PTHR42945:SF9">
    <property type="entry name" value="HISTIDINE BIOSYNTHESIS BIFUNCTIONAL PROTEIN HISIE"/>
    <property type="match status" value="1"/>
</dbReference>
<dbReference type="Pfam" id="PF01503">
    <property type="entry name" value="PRA-PH"/>
    <property type="match status" value="1"/>
</dbReference>
<dbReference type="SUPFAM" id="SSF101386">
    <property type="entry name" value="all-alpha NTP pyrophosphatases"/>
    <property type="match status" value="1"/>
</dbReference>
<feature type="chain" id="PRO_0000136357" description="Phosphoribosyl-ATP pyrophosphatase">
    <location>
        <begin position="1"/>
        <end position="110"/>
    </location>
</feature>